<comment type="function">
    <text evidence="1 4">Negative regulator of the mitochondrial calcium uniporter (MCU), a channel that mediates calcium uptake into the mitochondrial matrix (PubMed:31533452). MCUB is required to limit mitochondrial calcium overload during stress (PubMed:31533452). Acts as a dominant-negative regulator that displaces MCU from the functional uniplex complex and thereby decreases the association of calcium sensors MICU1 and MICU2, preventing channel gating (PubMed:31533452). Mitochondrial calcium homeostasis plays key roles in mitochondrial metabolism (PubMed:31533452). Acts as an important regulator of mitochondrial metabolism in response to stress in muscle cells: induced in response to fasting, leading to restrict mitochondrial calcium uptake, resulting in reprogramming of mitochondria toward fatty acid oxidation preference (By similarity). Acts as a regulator of macrophage polarization during skeletal muscle regeneration: inhibition of mitochondrial calcium uptake drives differentiation of macrophages with anti-inflammatory profile, promoting the differentiation and fusion of satellite cells (By similarity).</text>
</comment>
<comment type="subunit">
    <text evidence="1 3">Homooligomer (By similarity). Associates with the uniplex complex, composed of MCU, MICU1, MICU2 and EMRE/SMDT1, inhibiting its activity (PubMed:24231807).</text>
</comment>
<comment type="interaction">
    <interactant intactId="EBI-719989">
        <id>Q9NWR8</id>
    </interactant>
    <interactant intactId="EBI-79691">
        <id>Q15047</id>
        <label>SETDB1</label>
    </interactant>
    <organismsDiffer>false</organismsDiffer>
    <experiments>3</experiments>
</comment>
<comment type="subcellular location">
    <subcellularLocation>
        <location evidence="3">Mitochondrion inner membrane</location>
        <topology evidence="2">Multi-pass membrane protein</topology>
    </subcellularLocation>
</comment>
<comment type="similarity">
    <text evidence="7">Belongs to the MCU (TC 1.A.77) family.</text>
</comment>
<comment type="sequence caution" evidence="7">
    <conflict type="erroneous initiation">
        <sequence resource="EMBL-CDS" id="AAH02633"/>
    </conflict>
</comment>
<comment type="sequence caution" evidence="7">
    <conflict type="erroneous initiation">
        <sequence resource="EMBL-CDS" id="BAA91309"/>
    </conflict>
</comment>
<sequence length="336" mass="39082">MLQRGLWPWRTRLLPTPGTWRPARPWPLPPPPQVLRVKLCGNVKYYQSHHYSTVVPPDEITVIYRHGLPLVTLTLPSRKERCQFVVKPMLSTVGSFLQDLQNEDKGIKTAAIFTADGNMISASTLMDILLMNDFKLVINKIAYDVQCPKREKPSNEHTAEMEHMKSLVHRLFTILHLEESQKKREHHLLEKIDHLKEQLQPLEQVKAGIEAHSEAKTSGLLWAGLALLSIQGGALAWLTWWVYSWDIMEPVTYFITFANSMVFFAYFIVTRQDYTYSAVKSRQFLQFFHKKSKQQHFDVQQYNKLKEDLAKAKESLKQARHSLCLQMQVEELNEKN</sequence>
<keyword id="KW-0106">Calcium</keyword>
<keyword id="KW-0109">Calcium transport</keyword>
<keyword id="KW-0175">Coiled coil</keyword>
<keyword id="KW-0406">Ion transport</keyword>
<keyword id="KW-0472">Membrane</keyword>
<keyword id="KW-0496">Mitochondrion</keyword>
<keyword id="KW-0999">Mitochondrion inner membrane</keyword>
<keyword id="KW-1267">Proteomics identification</keyword>
<keyword id="KW-1185">Reference proteome</keyword>
<keyword id="KW-0809">Transit peptide</keyword>
<keyword id="KW-0812">Transmembrane</keyword>
<keyword id="KW-1133">Transmembrane helix</keyword>
<keyword id="KW-0813">Transport</keyword>
<feature type="transit peptide" description="Mitochondrion" evidence="2">
    <location>
        <begin position="1"/>
        <end position="35"/>
    </location>
</feature>
<feature type="chain" id="PRO_0000282980" description="Calcium uniporter regulatory subunit MCUb, mitochondrial">
    <location>
        <begin position="36"/>
        <end position="336"/>
    </location>
</feature>
<feature type="transmembrane region" description="Helical" evidence="2">
    <location>
        <begin position="220"/>
        <end position="240"/>
    </location>
</feature>
<feature type="transmembrane region" description="Helical" evidence="2">
    <location>
        <begin position="250"/>
        <end position="270"/>
    </location>
</feature>
<feature type="coiled-coil region" evidence="2">
    <location>
        <begin position="179"/>
        <end position="210"/>
    </location>
</feature>
<feature type="coiled-coil region" evidence="2">
    <location>
        <begin position="297"/>
        <end position="323"/>
    </location>
</feature>
<feature type="sequence variant" id="VAR_060149" description="In dbSNP:rs4698744.">
    <original>I</original>
    <variation>N</variation>
    <location>
        <position position="63"/>
    </location>
</feature>
<feature type="sequence variant" id="VAR_031443" description="In dbSNP:rs13846.">
    <original>Y</original>
    <variation>F</variation>
    <location>
        <position position="253"/>
    </location>
</feature>
<feature type="sequence variant" id="VAR_031444" description="In dbSNP:rs1053680." evidence="5">
    <original>I</original>
    <variation>V</variation>
    <location>
        <position position="255"/>
    </location>
</feature>
<feature type="sequence conflict" description="In Ref. 4; CAG33515." evidence="7" ref="4">
    <original>D</original>
    <variation>G</variation>
    <location>
        <position position="193"/>
    </location>
</feature>
<feature type="sequence conflict" description="In Ref. 4; CAG33515." evidence="7" ref="4">
    <original>E</original>
    <variation>G</variation>
    <location>
        <position position="214"/>
    </location>
</feature>
<accession>Q9NWR8</accession>
<accession>A8K4Y3</accession>
<accession>Q6IAC1</accession>
<evidence type="ECO:0000250" key="1">
    <source>
        <dbReference type="UniProtKB" id="Q810S1"/>
    </source>
</evidence>
<evidence type="ECO:0000255" key="2"/>
<evidence type="ECO:0000269" key="3">
    <source>
    </source>
</evidence>
<evidence type="ECO:0000269" key="4">
    <source>
    </source>
</evidence>
<evidence type="ECO:0000269" key="5">
    <source ref="4"/>
</evidence>
<evidence type="ECO:0000303" key="6">
    <source>
    </source>
</evidence>
<evidence type="ECO:0000305" key="7"/>
<evidence type="ECO:0000312" key="8">
    <source>
        <dbReference type="HGNC" id="HGNC:26076"/>
    </source>
</evidence>
<organism>
    <name type="scientific">Homo sapiens</name>
    <name type="common">Human</name>
    <dbReference type="NCBI Taxonomy" id="9606"/>
    <lineage>
        <taxon>Eukaryota</taxon>
        <taxon>Metazoa</taxon>
        <taxon>Chordata</taxon>
        <taxon>Craniata</taxon>
        <taxon>Vertebrata</taxon>
        <taxon>Euteleostomi</taxon>
        <taxon>Mammalia</taxon>
        <taxon>Eutheria</taxon>
        <taxon>Euarchontoglires</taxon>
        <taxon>Primates</taxon>
        <taxon>Haplorrhini</taxon>
        <taxon>Catarrhini</taxon>
        <taxon>Hominidae</taxon>
        <taxon>Homo</taxon>
    </lineage>
</organism>
<name>MCUB_HUMAN</name>
<protein>
    <recommendedName>
        <fullName evidence="7">Calcium uniporter regulatory subunit MCUb, mitochondrial</fullName>
        <shortName evidence="1">MCUb</shortName>
    </recommendedName>
    <alternativeName>
        <fullName evidence="7">Coiled-coil domain-containing protein 109B</fullName>
    </alternativeName>
</protein>
<gene>
    <name evidence="6 8" type="primary">MCUB</name>
    <name evidence="8" type="synonym">CCDC109B</name>
</gene>
<reference key="1">
    <citation type="journal article" date="2004" name="Nat. Genet.">
        <title>Complete sequencing and characterization of 21,243 full-length human cDNAs.</title>
        <authorList>
            <person name="Ota T."/>
            <person name="Suzuki Y."/>
            <person name="Nishikawa T."/>
            <person name="Otsuki T."/>
            <person name="Sugiyama T."/>
            <person name="Irie R."/>
            <person name="Wakamatsu A."/>
            <person name="Hayashi K."/>
            <person name="Sato H."/>
            <person name="Nagai K."/>
            <person name="Kimura K."/>
            <person name="Makita H."/>
            <person name="Sekine M."/>
            <person name="Obayashi M."/>
            <person name="Nishi T."/>
            <person name="Shibahara T."/>
            <person name="Tanaka T."/>
            <person name="Ishii S."/>
            <person name="Yamamoto J."/>
            <person name="Saito K."/>
            <person name="Kawai Y."/>
            <person name="Isono Y."/>
            <person name="Nakamura Y."/>
            <person name="Nagahari K."/>
            <person name="Murakami K."/>
            <person name="Yasuda T."/>
            <person name="Iwayanagi T."/>
            <person name="Wagatsuma M."/>
            <person name="Shiratori A."/>
            <person name="Sudo H."/>
            <person name="Hosoiri T."/>
            <person name="Kaku Y."/>
            <person name="Kodaira H."/>
            <person name="Kondo H."/>
            <person name="Sugawara M."/>
            <person name="Takahashi M."/>
            <person name="Kanda K."/>
            <person name="Yokoi T."/>
            <person name="Furuya T."/>
            <person name="Kikkawa E."/>
            <person name="Omura Y."/>
            <person name="Abe K."/>
            <person name="Kamihara K."/>
            <person name="Katsuta N."/>
            <person name="Sato K."/>
            <person name="Tanikawa M."/>
            <person name="Yamazaki M."/>
            <person name="Ninomiya K."/>
            <person name="Ishibashi T."/>
            <person name="Yamashita H."/>
            <person name="Murakawa K."/>
            <person name="Fujimori K."/>
            <person name="Tanai H."/>
            <person name="Kimata M."/>
            <person name="Watanabe M."/>
            <person name="Hiraoka S."/>
            <person name="Chiba Y."/>
            <person name="Ishida S."/>
            <person name="Ono Y."/>
            <person name="Takiguchi S."/>
            <person name="Watanabe S."/>
            <person name="Yosida M."/>
            <person name="Hotuta T."/>
            <person name="Kusano J."/>
            <person name="Kanehori K."/>
            <person name="Takahashi-Fujii A."/>
            <person name="Hara H."/>
            <person name="Tanase T.-O."/>
            <person name="Nomura Y."/>
            <person name="Togiya S."/>
            <person name="Komai F."/>
            <person name="Hara R."/>
            <person name="Takeuchi K."/>
            <person name="Arita M."/>
            <person name="Imose N."/>
            <person name="Musashino K."/>
            <person name="Yuuki H."/>
            <person name="Oshima A."/>
            <person name="Sasaki N."/>
            <person name="Aotsuka S."/>
            <person name="Yoshikawa Y."/>
            <person name="Matsunawa H."/>
            <person name="Ichihara T."/>
            <person name="Shiohata N."/>
            <person name="Sano S."/>
            <person name="Moriya S."/>
            <person name="Momiyama H."/>
            <person name="Satoh N."/>
            <person name="Takami S."/>
            <person name="Terashima Y."/>
            <person name="Suzuki O."/>
            <person name="Nakagawa S."/>
            <person name="Senoh A."/>
            <person name="Mizoguchi H."/>
            <person name="Goto Y."/>
            <person name="Shimizu F."/>
            <person name="Wakebe H."/>
            <person name="Hishigaki H."/>
            <person name="Watanabe T."/>
            <person name="Sugiyama A."/>
            <person name="Takemoto M."/>
            <person name="Kawakami B."/>
            <person name="Yamazaki M."/>
            <person name="Watanabe K."/>
            <person name="Kumagai A."/>
            <person name="Itakura S."/>
            <person name="Fukuzumi Y."/>
            <person name="Fujimori Y."/>
            <person name="Komiyama M."/>
            <person name="Tashiro H."/>
            <person name="Tanigami A."/>
            <person name="Fujiwara T."/>
            <person name="Ono T."/>
            <person name="Yamada K."/>
            <person name="Fujii Y."/>
            <person name="Ozaki K."/>
            <person name="Hirao M."/>
            <person name="Ohmori Y."/>
            <person name="Kawabata A."/>
            <person name="Hikiji T."/>
            <person name="Kobatake N."/>
            <person name="Inagaki H."/>
            <person name="Ikema Y."/>
            <person name="Okamoto S."/>
            <person name="Okitani R."/>
            <person name="Kawakami T."/>
            <person name="Noguchi S."/>
            <person name="Itoh T."/>
            <person name="Shigeta K."/>
            <person name="Senba T."/>
            <person name="Matsumura K."/>
            <person name="Nakajima Y."/>
            <person name="Mizuno T."/>
            <person name="Morinaga M."/>
            <person name="Sasaki M."/>
            <person name="Togashi T."/>
            <person name="Oyama M."/>
            <person name="Hata H."/>
            <person name="Watanabe M."/>
            <person name="Komatsu T."/>
            <person name="Mizushima-Sugano J."/>
            <person name="Satoh T."/>
            <person name="Shirai Y."/>
            <person name="Takahashi Y."/>
            <person name="Nakagawa K."/>
            <person name="Okumura K."/>
            <person name="Nagase T."/>
            <person name="Nomura N."/>
            <person name="Kikuchi H."/>
            <person name="Masuho Y."/>
            <person name="Yamashita R."/>
            <person name="Nakai K."/>
            <person name="Yada T."/>
            <person name="Nakamura Y."/>
            <person name="Ohara O."/>
            <person name="Isogai T."/>
            <person name="Sugano S."/>
        </authorList>
    </citation>
    <scope>NUCLEOTIDE SEQUENCE [LARGE SCALE MRNA]</scope>
</reference>
<reference key="2">
    <citation type="submission" date="2005-07" db="EMBL/GenBank/DDBJ databases">
        <authorList>
            <person name="Mural R.J."/>
            <person name="Istrail S."/>
            <person name="Sutton G.G."/>
            <person name="Florea L."/>
            <person name="Halpern A.L."/>
            <person name="Mobarry C.M."/>
            <person name="Lippert R."/>
            <person name="Walenz B."/>
            <person name="Shatkay H."/>
            <person name="Dew I."/>
            <person name="Miller J.R."/>
            <person name="Flanigan M.J."/>
            <person name="Edwards N.J."/>
            <person name="Bolanos R."/>
            <person name="Fasulo D."/>
            <person name="Halldorsson B.V."/>
            <person name="Hannenhalli S."/>
            <person name="Turner R."/>
            <person name="Yooseph S."/>
            <person name="Lu F."/>
            <person name="Nusskern D.R."/>
            <person name="Shue B.C."/>
            <person name="Zheng X.H."/>
            <person name="Zhong F."/>
            <person name="Delcher A.L."/>
            <person name="Huson D.H."/>
            <person name="Kravitz S.A."/>
            <person name="Mouchard L."/>
            <person name="Reinert K."/>
            <person name="Remington K.A."/>
            <person name="Clark A.G."/>
            <person name="Waterman M.S."/>
            <person name="Eichler E.E."/>
            <person name="Adams M.D."/>
            <person name="Hunkapiller M.W."/>
            <person name="Myers E.W."/>
            <person name="Venter J.C."/>
        </authorList>
    </citation>
    <scope>NUCLEOTIDE SEQUENCE [LARGE SCALE GENOMIC DNA]</scope>
</reference>
<reference key="3">
    <citation type="journal article" date="2004" name="Genome Res.">
        <title>The status, quality, and expansion of the NIH full-length cDNA project: the Mammalian Gene Collection (MGC).</title>
        <authorList>
            <consortium name="The MGC Project Team"/>
        </authorList>
    </citation>
    <scope>NUCLEOTIDE SEQUENCE [LARGE SCALE MRNA]</scope>
    <source>
        <tissue>Uterus</tissue>
    </source>
</reference>
<reference key="4">
    <citation type="submission" date="2004-06" db="EMBL/GenBank/DDBJ databases">
        <title>Cloning of human full open reading frames in Gateway(TM) system entry vector (pDONR201).</title>
        <authorList>
            <person name="Ebert L."/>
            <person name="Schick M."/>
            <person name="Neubert P."/>
            <person name="Schatten R."/>
            <person name="Henze S."/>
            <person name="Korn B."/>
        </authorList>
    </citation>
    <scope>NUCLEOTIDE SEQUENCE [LARGE SCALE MRNA] OF 89-336</scope>
    <scope>VARIANT VAL-255</scope>
</reference>
<reference key="5">
    <citation type="journal article" date="2013" name="Science">
        <title>EMRE is an essential component of the mitochondrial calcium uniporter complex.</title>
        <authorList>
            <person name="Sancak Y."/>
            <person name="Markhard A.L."/>
            <person name="Kitami T."/>
            <person name="Kovacs-Bogdan E."/>
            <person name="Kamer K.J."/>
            <person name="Udeshi N.D."/>
            <person name="Carr S.A."/>
            <person name="Chaudhuri D."/>
            <person name="Clapham D.E."/>
            <person name="Li A.A."/>
            <person name="Calvo S.E."/>
            <person name="Goldberger O."/>
            <person name="Mootha V.K."/>
        </authorList>
    </citation>
    <scope>SUBCELLULAR LOCATION</scope>
    <scope>INTERACTION WITH THE UNIPLEX COMPLEX</scope>
</reference>
<reference key="6">
    <citation type="journal article" date="2019" name="Circulation">
        <title>MCUB regulates the molecular composition of the mitochondrial calcium uniporter channel to limit mitochondrial calcium overload during stress.</title>
        <authorList>
            <person name="Lambert J.P."/>
            <person name="Luongo T.S."/>
            <person name="Tomar D."/>
            <person name="Jadiya P."/>
            <person name="Gao E."/>
            <person name="Zhang X."/>
            <person name="Lucchese A.M."/>
            <person name="Kolmetzky D.W."/>
            <person name="Shah N.S."/>
            <person name="Elrod J.W."/>
        </authorList>
    </citation>
    <scope>FUNCTION</scope>
</reference>
<proteinExistence type="evidence at protein level"/>
<dbReference type="EMBL" id="AK000654">
    <property type="protein sequence ID" value="BAA91309.1"/>
    <property type="status" value="ALT_INIT"/>
    <property type="molecule type" value="mRNA"/>
</dbReference>
<dbReference type="EMBL" id="AK291098">
    <property type="protein sequence ID" value="BAF83787.1"/>
    <property type="molecule type" value="mRNA"/>
</dbReference>
<dbReference type="EMBL" id="CH471057">
    <property type="protein sequence ID" value="EAX06242.1"/>
    <property type="molecule type" value="Genomic_DNA"/>
</dbReference>
<dbReference type="EMBL" id="BC002633">
    <property type="protein sequence ID" value="AAH02633.1"/>
    <property type="status" value="ALT_INIT"/>
    <property type="molecule type" value="mRNA"/>
</dbReference>
<dbReference type="EMBL" id="CR457234">
    <property type="protein sequence ID" value="CAG33515.1"/>
    <property type="molecule type" value="mRNA"/>
</dbReference>
<dbReference type="CCDS" id="CCDS3683.2"/>
<dbReference type="RefSeq" id="NP_060388.2">
    <property type="nucleotide sequence ID" value="NM_017918.5"/>
</dbReference>
<dbReference type="SMR" id="Q9NWR8"/>
<dbReference type="BioGRID" id="120345">
    <property type="interactions" value="172"/>
</dbReference>
<dbReference type="ComplexPortal" id="CPX-5966">
    <property type="entry name" value="Mitochondrial calcium uniporter complex, MICUB variant"/>
</dbReference>
<dbReference type="CORUM" id="Q9NWR8"/>
<dbReference type="FunCoup" id="Q9NWR8">
    <property type="interactions" value="418"/>
</dbReference>
<dbReference type="IntAct" id="Q9NWR8">
    <property type="interactions" value="14"/>
</dbReference>
<dbReference type="STRING" id="9606.ENSP00000378145"/>
<dbReference type="TCDB" id="1.A.77.1.12">
    <property type="family name" value="the mg(2+)/ca(2+) uniporter (mcu) family"/>
</dbReference>
<dbReference type="GlyGen" id="Q9NWR8">
    <property type="glycosylation" value="2 sites, 1 O-linked glycan (1 site)"/>
</dbReference>
<dbReference type="iPTMnet" id="Q9NWR8"/>
<dbReference type="PhosphoSitePlus" id="Q9NWR8"/>
<dbReference type="BioMuta" id="MCUB"/>
<dbReference type="DMDM" id="143955289"/>
<dbReference type="jPOST" id="Q9NWR8"/>
<dbReference type="MassIVE" id="Q9NWR8"/>
<dbReference type="PaxDb" id="9606-ENSP00000378145"/>
<dbReference type="PeptideAtlas" id="Q9NWR8"/>
<dbReference type="ProteomicsDB" id="82963"/>
<dbReference type="Pumba" id="Q9NWR8"/>
<dbReference type="Antibodypedia" id="62656">
    <property type="antibodies" value="78 antibodies from 17 providers"/>
</dbReference>
<dbReference type="DNASU" id="55013"/>
<dbReference type="Ensembl" id="ENST00000394650.7">
    <property type="protein sequence ID" value="ENSP00000378145.4"/>
    <property type="gene ID" value="ENSG00000005059.16"/>
</dbReference>
<dbReference type="GeneID" id="55013"/>
<dbReference type="KEGG" id="hsa:55013"/>
<dbReference type="MANE-Select" id="ENST00000394650.7">
    <property type="protein sequence ID" value="ENSP00000378145.4"/>
    <property type="RefSeq nucleotide sequence ID" value="NM_017918.5"/>
    <property type="RefSeq protein sequence ID" value="NP_060388.2"/>
</dbReference>
<dbReference type="UCSC" id="uc011cfs.3">
    <property type="organism name" value="human"/>
</dbReference>
<dbReference type="AGR" id="HGNC:26076"/>
<dbReference type="CTD" id="55013"/>
<dbReference type="DisGeNET" id="55013"/>
<dbReference type="GeneCards" id="MCUB"/>
<dbReference type="HGNC" id="HGNC:26076">
    <property type="gene designation" value="MCUB"/>
</dbReference>
<dbReference type="HPA" id="ENSG00000005059">
    <property type="expression patterns" value="Tissue enhanced (lymphoid)"/>
</dbReference>
<dbReference type="MIM" id="620702">
    <property type="type" value="gene"/>
</dbReference>
<dbReference type="neXtProt" id="NX_Q9NWR8"/>
<dbReference type="OpenTargets" id="ENSG00000005059"/>
<dbReference type="PharmGKB" id="PA145008731"/>
<dbReference type="VEuPathDB" id="HostDB:ENSG00000005059"/>
<dbReference type="eggNOG" id="KOG2966">
    <property type="taxonomic scope" value="Eukaryota"/>
</dbReference>
<dbReference type="GeneTree" id="ENSGT00940000158059"/>
<dbReference type="HOGENOM" id="CLU_056554_0_1_1"/>
<dbReference type="InParanoid" id="Q9NWR8"/>
<dbReference type="OMA" id="TINYKHG"/>
<dbReference type="OrthoDB" id="278338at2759"/>
<dbReference type="PAN-GO" id="Q9NWR8">
    <property type="GO annotations" value="5 GO annotations based on evolutionary models"/>
</dbReference>
<dbReference type="PhylomeDB" id="Q9NWR8"/>
<dbReference type="TreeFam" id="TF314435"/>
<dbReference type="PathwayCommons" id="Q9NWR8"/>
<dbReference type="Reactome" id="R-HSA-8949215">
    <property type="pathway name" value="Mitochondrial calcium ion transport"/>
</dbReference>
<dbReference type="Reactome" id="R-HSA-8949664">
    <property type="pathway name" value="Processing of SMDT1"/>
</dbReference>
<dbReference type="SignaLink" id="Q9NWR8"/>
<dbReference type="SIGNOR" id="Q9NWR8"/>
<dbReference type="BioGRID-ORCS" id="55013">
    <property type="hits" value="13 hits in 1156 CRISPR screens"/>
</dbReference>
<dbReference type="ChiTaRS" id="MCUB">
    <property type="organism name" value="human"/>
</dbReference>
<dbReference type="GenomeRNAi" id="55013"/>
<dbReference type="Pharos" id="Q9NWR8">
    <property type="development level" value="Tbio"/>
</dbReference>
<dbReference type="PRO" id="PR:Q9NWR8"/>
<dbReference type="Proteomes" id="UP000005640">
    <property type="component" value="Chromosome 4"/>
</dbReference>
<dbReference type="RNAct" id="Q9NWR8">
    <property type="molecule type" value="protein"/>
</dbReference>
<dbReference type="Bgee" id="ENSG00000005059">
    <property type="expression patterns" value="Expressed in monocyte and 177 other cell types or tissues"/>
</dbReference>
<dbReference type="GO" id="GO:0034704">
    <property type="term" value="C:calcium channel complex"/>
    <property type="evidence" value="ECO:0000250"/>
    <property type="project" value="UniProtKB"/>
</dbReference>
<dbReference type="GO" id="GO:0005829">
    <property type="term" value="C:cytosol"/>
    <property type="evidence" value="ECO:0000314"/>
    <property type="project" value="HPA"/>
</dbReference>
<dbReference type="GO" id="GO:0016020">
    <property type="term" value="C:membrane"/>
    <property type="evidence" value="ECO:0000250"/>
    <property type="project" value="UniProtKB"/>
</dbReference>
<dbReference type="GO" id="GO:0005743">
    <property type="term" value="C:mitochondrial inner membrane"/>
    <property type="evidence" value="ECO:0000314"/>
    <property type="project" value="UniProtKB"/>
</dbReference>
<dbReference type="GO" id="GO:0005739">
    <property type="term" value="C:mitochondrion"/>
    <property type="evidence" value="ECO:0000314"/>
    <property type="project" value="HPA"/>
</dbReference>
<dbReference type="GO" id="GO:1990246">
    <property type="term" value="C:uniplex complex"/>
    <property type="evidence" value="ECO:0000314"/>
    <property type="project" value="UniProtKB"/>
</dbReference>
<dbReference type="GO" id="GO:0019855">
    <property type="term" value="F:calcium channel inhibitor activity"/>
    <property type="evidence" value="ECO:0000314"/>
    <property type="project" value="UniProtKB"/>
</dbReference>
<dbReference type="GO" id="GO:0036444">
    <property type="term" value="P:calcium import into the mitochondrion"/>
    <property type="evidence" value="ECO:0000318"/>
    <property type="project" value="GO_Central"/>
</dbReference>
<dbReference type="GO" id="GO:0051560">
    <property type="term" value="P:mitochondrial calcium ion homeostasis"/>
    <property type="evidence" value="ECO:0000250"/>
    <property type="project" value="UniProtKB"/>
</dbReference>
<dbReference type="GO" id="GO:0006851">
    <property type="term" value="P:mitochondrial calcium ion transmembrane transport"/>
    <property type="evidence" value="ECO:0000250"/>
    <property type="project" value="UniProtKB"/>
</dbReference>
<dbReference type="GO" id="GO:0110099">
    <property type="term" value="P:negative regulation of calcium import into the mitochondrion"/>
    <property type="evidence" value="ECO:0000314"/>
    <property type="project" value="UniProtKB"/>
</dbReference>
<dbReference type="GO" id="GO:1902726">
    <property type="term" value="P:positive regulation of skeletal muscle satellite cell differentiation"/>
    <property type="evidence" value="ECO:0000250"/>
    <property type="project" value="UniProtKB"/>
</dbReference>
<dbReference type="GO" id="GO:0043030">
    <property type="term" value="P:regulation of macrophage activation"/>
    <property type="evidence" value="ECO:0000250"/>
    <property type="project" value="UniProtKB"/>
</dbReference>
<dbReference type="GO" id="GO:0043403">
    <property type="term" value="P:skeletal muscle tissue regeneration"/>
    <property type="evidence" value="ECO:0000250"/>
    <property type="project" value="UniProtKB"/>
</dbReference>
<dbReference type="InterPro" id="IPR006769">
    <property type="entry name" value="MCU_C"/>
</dbReference>
<dbReference type="InterPro" id="IPR039055">
    <property type="entry name" value="MCU_fam"/>
</dbReference>
<dbReference type="PANTHER" id="PTHR13462">
    <property type="entry name" value="CALCIUM UNIPORTER PROTEIN, MITOCHONDRIAL"/>
    <property type="match status" value="1"/>
</dbReference>
<dbReference type="PANTHER" id="PTHR13462:SF6">
    <property type="entry name" value="CALCIUM UNIPORTER REGULATORY SUBUNIT MCUB, MITOCHONDRIAL"/>
    <property type="match status" value="1"/>
</dbReference>
<dbReference type="Pfam" id="PF04678">
    <property type="entry name" value="MCU"/>
    <property type="match status" value="1"/>
</dbReference>